<geneLocation type="plasmid">
    <name>pXO2</name>
</geneLocation>
<sequence length="136" mass="16424">MEEIKCLLCRYLKERQEKFISDWKKKVIIRERDPYKEEIIKNGEHLLSAFIMYLKEEISLQEIEITSKKIARERIDAKVNIAEFIHNTNVAKIEIMNILTLLNPDLQQYQALVKKINQFFDHLIYYTVHSYYEQKA</sequence>
<gene>
    <name type="ordered locus">pXO2-61</name>
    <name type="ordered locus">BXB0075</name>
    <name type="ordered locus">GBAA_pXO2_0075</name>
</gene>
<proteinExistence type="evidence at protein level"/>
<reference key="1">
    <citation type="journal article" date="1999" name="J. Appl. Microbiol.">
        <title>Sequence, assembly and analysis of pXO1 and pXO2.</title>
        <authorList>
            <person name="Okinaka R.T."/>
            <person name="Cloud K."/>
            <person name="Hampton O."/>
            <person name="Hoffmaster A."/>
            <person name="Hill K.K."/>
            <person name="Keim P."/>
            <person name="Koehler T."/>
            <person name="Lamke G."/>
            <person name="Kumano S."/>
            <person name="Manter D."/>
            <person name="Martinez Y."/>
            <person name="Ricke D."/>
            <person name="Svensson R."/>
            <person name="Jackson P.J."/>
        </authorList>
    </citation>
    <scope>NUCLEOTIDE SEQUENCE [GENOMIC DNA]</scope>
    <source>
        <strain>Pasteur</strain>
    </source>
</reference>
<reference key="2">
    <citation type="journal article" date="2002" name="Science">
        <title>Comparative genome sequencing for discovery of novel polymorphisms in Bacillus anthracis.</title>
        <authorList>
            <person name="Read T.D."/>
            <person name="Salzberg S.L."/>
            <person name="Pop M."/>
            <person name="Shumway M.F."/>
            <person name="Umayam L."/>
            <person name="Jiang L."/>
            <person name="Holtzapple E."/>
            <person name="Busch J.D."/>
            <person name="Smith K.L."/>
            <person name="Schupp J.M."/>
            <person name="Solomon D."/>
            <person name="Keim P."/>
            <person name="Fraser C.M."/>
        </authorList>
    </citation>
    <scope>NUCLEOTIDE SEQUENCE [GENOMIC DNA]</scope>
    <source>
        <strain>Ames / isolate Florida / A2012</strain>
    </source>
</reference>
<reference key="3">
    <citation type="journal article" date="2009" name="J. Bacteriol.">
        <title>The complete genome sequence of Bacillus anthracis Ames 'Ancestor'.</title>
        <authorList>
            <person name="Ravel J."/>
            <person name="Jiang L."/>
            <person name="Stanley S.T."/>
            <person name="Wilson M.R."/>
            <person name="Decker R.S."/>
            <person name="Read T.D."/>
            <person name="Worsham P."/>
            <person name="Keim P.S."/>
            <person name="Salzberg S.L."/>
            <person name="Fraser-Liggett C.M."/>
            <person name="Rasko D.A."/>
        </authorList>
    </citation>
    <scope>NUCLEOTIDE SEQUENCE [LARGE SCALE GENOMIC DNA]</scope>
    <source>
        <strain>Ames ancestor</strain>
    </source>
</reference>
<accession>Q9RMX2</accession>
<accession>Q7CM87</accession>
<organism>
    <name type="scientific">Bacillus anthracis</name>
    <dbReference type="NCBI Taxonomy" id="1392"/>
    <lineage>
        <taxon>Bacteria</taxon>
        <taxon>Bacillati</taxon>
        <taxon>Bacillota</taxon>
        <taxon>Bacilli</taxon>
        <taxon>Bacillales</taxon>
        <taxon>Bacillaceae</taxon>
        <taxon>Bacillus</taxon>
        <taxon>Bacillus cereus group</taxon>
    </lineage>
</organism>
<evidence type="ECO:0007829" key="1">
    <source>
        <dbReference type="PDB" id="3PMC"/>
    </source>
</evidence>
<name>Y6575_BACAN</name>
<dbReference type="EMBL" id="AF188935">
    <property type="protein sequence ID" value="AAF13666.1"/>
    <property type="molecule type" value="Genomic_DNA"/>
</dbReference>
<dbReference type="EMBL" id="AE011191">
    <property type="protein sequence ID" value="AAM26229.1"/>
    <property type="molecule type" value="Genomic_DNA"/>
</dbReference>
<dbReference type="EMBL" id="AE017335">
    <property type="protein sequence ID" value="AAT29005.2"/>
    <property type="molecule type" value="Genomic_DNA"/>
</dbReference>
<dbReference type="RefSeq" id="NP_053216.1">
    <property type="nucleotide sequence ID" value="NC_002146.1"/>
</dbReference>
<dbReference type="RefSeq" id="WP_000391143.1">
    <property type="nucleotide sequence ID" value="NZ_VTZL01000009.1"/>
</dbReference>
<dbReference type="PDB" id="3PMC">
    <property type="method" value="X-ray"/>
    <property type="resolution" value="1.49 A"/>
    <property type="chains" value="A/B=1-136"/>
</dbReference>
<dbReference type="PDBsum" id="3PMC"/>
<dbReference type="SMR" id="Q9RMX2"/>
<dbReference type="GeneID" id="45025371"/>
<dbReference type="KEGG" id="banh:HYU01_29350"/>
<dbReference type="KEGG" id="bar:GBAA_pXO2_0075"/>
<dbReference type="HOGENOM" id="CLU_1841051_0_0_9"/>
<dbReference type="EvolutionaryTrace" id="Q9RMX2"/>
<dbReference type="Proteomes" id="UP000000594">
    <property type="component" value="Plasmid pXO2"/>
</dbReference>
<dbReference type="CDD" id="cd14755">
    <property type="entry name" value="GS_BA2291-HK-like"/>
    <property type="match status" value="1"/>
</dbReference>
<dbReference type="Gene3D" id="1.10.490.70">
    <property type="entry name" value="Histidine kinase N-terminal domain"/>
    <property type="match status" value="1"/>
</dbReference>
<dbReference type="InterPro" id="IPR018984">
    <property type="entry name" value="Histidine_kinase_N"/>
</dbReference>
<dbReference type="Pfam" id="PF09385">
    <property type="entry name" value="HisK_N"/>
    <property type="match status" value="1"/>
</dbReference>
<feature type="chain" id="PRO_0000216857" description="Uncharacterized protein pXO2-61/BXB0075/GBAA_pXO2_0075">
    <location>
        <begin position="1"/>
        <end position="136"/>
    </location>
</feature>
<feature type="helix" evidence="1">
    <location>
        <begin position="7"/>
        <end position="14"/>
    </location>
</feature>
<feature type="helix" evidence="1">
    <location>
        <begin position="16"/>
        <end position="24"/>
    </location>
</feature>
<feature type="helix" evidence="1">
    <location>
        <begin position="36"/>
        <end position="54"/>
    </location>
</feature>
<feature type="helix" evidence="1">
    <location>
        <begin position="60"/>
        <end position="63"/>
    </location>
</feature>
<feature type="helix" evidence="1">
    <location>
        <begin position="64"/>
        <end position="77"/>
    </location>
</feature>
<feature type="helix" evidence="1">
    <location>
        <begin position="82"/>
        <end position="101"/>
    </location>
</feature>
<feature type="helix" evidence="1">
    <location>
        <begin position="106"/>
        <end position="135"/>
    </location>
</feature>
<protein>
    <recommendedName>
        <fullName>Uncharacterized protein pXO2-61/BXB0075/GBAA_pXO2_0075</fullName>
    </recommendedName>
</protein>
<keyword id="KW-0002">3D-structure</keyword>
<keyword id="KW-0614">Plasmid</keyword>
<keyword id="KW-1185">Reference proteome</keyword>